<reference key="1">
    <citation type="journal article" date="2004" name="Genome Res.">
        <title>The status, quality, and expansion of the NIH full-length cDNA project: the Mammalian Gene Collection (MGC).</title>
        <authorList>
            <consortium name="The MGC Project Team"/>
        </authorList>
    </citation>
    <scope>NUCLEOTIDE SEQUENCE [LARGE SCALE MRNA]</scope>
    <source>
        <tissue>Lung</tissue>
    </source>
</reference>
<reference key="2">
    <citation type="journal article" date="2006" name="Proc. Natl. Acad. Sci. U.S.A.">
        <title>Quantitative phosphoproteomics of vasopressin-sensitive renal cells: regulation of aquaporin-2 phosphorylation at two sites.</title>
        <authorList>
            <person name="Hoffert J.D."/>
            <person name="Pisitkun T."/>
            <person name="Wang G."/>
            <person name="Shen R.-F."/>
            <person name="Knepper M.A."/>
        </authorList>
    </citation>
    <scope>PHOSPHORYLATION [LARGE SCALE ANALYSIS] AT THR-348 AND THR-361</scope>
    <scope>IDENTIFICATION BY MASS SPECTROMETRY [LARGE SCALE ANALYSIS]</scope>
</reference>
<reference key="3">
    <citation type="journal article" date="2012" name="Nat. Commun.">
        <title>Quantitative maps of protein phosphorylation sites across 14 different rat organs and tissues.</title>
        <authorList>
            <person name="Lundby A."/>
            <person name="Secher A."/>
            <person name="Lage K."/>
            <person name="Nordsborg N.B."/>
            <person name="Dmytriyev A."/>
            <person name="Lundby C."/>
            <person name="Olsen J.V."/>
        </authorList>
    </citation>
    <scope>PHOSPHORYLATION [LARGE SCALE ANALYSIS] AT SER-197</scope>
    <scope>IDENTIFICATION BY MASS SPECTROMETRY [LARGE SCALE ANALYSIS]</scope>
</reference>
<keyword id="KW-0156">Chromatin regulator</keyword>
<keyword id="KW-0227">DNA damage</keyword>
<keyword id="KW-0234">DNA repair</keyword>
<keyword id="KW-1017">Isopeptide bond</keyword>
<keyword id="KW-0479">Metal-binding</keyword>
<keyword id="KW-0539">Nucleus</keyword>
<keyword id="KW-0597">Phosphoprotein</keyword>
<keyword id="KW-1185">Reference proteome</keyword>
<keyword id="KW-0808">Transferase</keyword>
<keyword id="KW-0832">Ubl conjugation</keyword>
<keyword id="KW-0833">Ubl conjugation pathway</keyword>
<keyword id="KW-0862">Zinc</keyword>
<keyword id="KW-0863">Zinc-finger</keyword>
<protein>
    <recommendedName>
        <fullName evidence="3">E3 ubiquitin-protein ligase RNF168</fullName>
        <ecNumber evidence="3">2.3.2.27</ecNumber>
    </recommendedName>
    <alternativeName>
        <fullName evidence="3">RING finger protein 168</fullName>
    </alternativeName>
    <alternativeName>
        <fullName>RING-type E3 ubiquitin transferase RNF168</fullName>
    </alternativeName>
</protein>
<dbReference type="EC" id="2.3.2.27" evidence="3"/>
<dbReference type="EMBL" id="BC166869">
    <property type="protein sequence ID" value="AAI66869.1"/>
    <property type="molecule type" value="mRNA"/>
</dbReference>
<dbReference type="RefSeq" id="NP_001121069.2">
    <property type="nucleotide sequence ID" value="NM_001127597.2"/>
</dbReference>
<dbReference type="SMR" id="B2RYR0"/>
<dbReference type="FunCoup" id="B2RYR0">
    <property type="interactions" value="2591"/>
</dbReference>
<dbReference type="STRING" id="10116.ENSRNOP00000002395"/>
<dbReference type="iPTMnet" id="B2RYR0"/>
<dbReference type="PhosphoSitePlus" id="B2RYR0"/>
<dbReference type="PaxDb" id="10116-ENSRNOP00000002395"/>
<dbReference type="GeneID" id="690043"/>
<dbReference type="KEGG" id="rno:690043"/>
<dbReference type="UCSC" id="RGD:1585168">
    <property type="organism name" value="rat"/>
</dbReference>
<dbReference type="AGR" id="RGD:1585168"/>
<dbReference type="CTD" id="165918"/>
<dbReference type="RGD" id="1585168">
    <property type="gene designation" value="Rnf168"/>
</dbReference>
<dbReference type="eggNOG" id="KOG4159">
    <property type="taxonomic scope" value="Eukaryota"/>
</dbReference>
<dbReference type="HOGENOM" id="CLU_030653_1_0_1"/>
<dbReference type="InParanoid" id="B2RYR0"/>
<dbReference type="OrthoDB" id="426657at2759"/>
<dbReference type="PhylomeDB" id="B2RYR0"/>
<dbReference type="Reactome" id="R-RNO-3108214">
    <property type="pathway name" value="SUMOylation of DNA damage response and repair proteins"/>
</dbReference>
<dbReference type="Reactome" id="R-RNO-5693565">
    <property type="pathway name" value="Recruitment and ATM-mediated phosphorylation of repair and signaling proteins at DNA double strand breaks"/>
</dbReference>
<dbReference type="Reactome" id="R-RNO-5693571">
    <property type="pathway name" value="Nonhomologous End-Joining (NHEJ)"/>
</dbReference>
<dbReference type="Reactome" id="R-RNO-5693607">
    <property type="pathway name" value="Processing of DNA double-strand break ends"/>
</dbReference>
<dbReference type="Reactome" id="R-RNO-69473">
    <property type="pathway name" value="G2/M DNA damage checkpoint"/>
</dbReference>
<dbReference type="UniPathway" id="UPA00143"/>
<dbReference type="PRO" id="PR:B2RYR0"/>
<dbReference type="Proteomes" id="UP000002494">
    <property type="component" value="Unplaced"/>
</dbReference>
<dbReference type="GO" id="GO:1990391">
    <property type="term" value="C:DNA repair complex"/>
    <property type="evidence" value="ECO:0000266"/>
    <property type="project" value="RGD"/>
</dbReference>
<dbReference type="GO" id="GO:0005634">
    <property type="term" value="C:nucleus"/>
    <property type="evidence" value="ECO:0000250"/>
    <property type="project" value="UniProtKB"/>
</dbReference>
<dbReference type="GO" id="GO:0032991">
    <property type="term" value="C:protein-containing complex"/>
    <property type="evidence" value="ECO:0000266"/>
    <property type="project" value="RGD"/>
</dbReference>
<dbReference type="GO" id="GO:0035861">
    <property type="term" value="C:site of double-strand break"/>
    <property type="evidence" value="ECO:0000250"/>
    <property type="project" value="UniProtKB"/>
</dbReference>
<dbReference type="GO" id="GO:0000151">
    <property type="term" value="C:ubiquitin ligase complex"/>
    <property type="evidence" value="ECO:0000250"/>
    <property type="project" value="UniProtKB"/>
</dbReference>
<dbReference type="GO" id="GO:0003682">
    <property type="term" value="F:chromatin binding"/>
    <property type="evidence" value="ECO:0000250"/>
    <property type="project" value="UniProtKB"/>
</dbReference>
<dbReference type="GO" id="GO:0042393">
    <property type="term" value="F:histone binding"/>
    <property type="evidence" value="ECO:0000250"/>
    <property type="project" value="UniProtKB"/>
</dbReference>
<dbReference type="GO" id="GO:0140858">
    <property type="term" value="F:histone H2AK15 ubiquitin ligase activity"/>
    <property type="evidence" value="ECO:0000266"/>
    <property type="project" value="RGD"/>
</dbReference>
<dbReference type="GO" id="GO:0140852">
    <property type="term" value="F:histone ubiquitin ligase activity"/>
    <property type="evidence" value="ECO:0000266"/>
    <property type="project" value="RGD"/>
</dbReference>
<dbReference type="GO" id="GO:0070530">
    <property type="term" value="F:K63-linked polyubiquitin modification-dependent protein binding"/>
    <property type="evidence" value="ECO:0000250"/>
    <property type="project" value="UniProtKB"/>
</dbReference>
<dbReference type="GO" id="GO:0031491">
    <property type="term" value="F:nucleosome binding"/>
    <property type="evidence" value="ECO:0000266"/>
    <property type="project" value="RGD"/>
</dbReference>
<dbReference type="GO" id="GO:0043130">
    <property type="term" value="F:ubiquitin binding"/>
    <property type="evidence" value="ECO:0000250"/>
    <property type="project" value="UniProtKB"/>
</dbReference>
<dbReference type="GO" id="GO:0004842">
    <property type="term" value="F:ubiquitin-protein transferase activity"/>
    <property type="evidence" value="ECO:0000250"/>
    <property type="project" value="UniProtKB"/>
</dbReference>
<dbReference type="GO" id="GO:0008270">
    <property type="term" value="F:zinc ion binding"/>
    <property type="evidence" value="ECO:0007669"/>
    <property type="project" value="UniProtKB-KW"/>
</dbReference>
<dbReference type="GO" id="GO:0034644">
    <property type="term" value="P:cellular response to UV"/>
    <property type="evidence" value="ECO:0000266"/>
    <property type="project" value="RGD"/>
</dbReference>
<dbReference type="GO" id="GO:0006974">
    <property type="term" value="P:DNA damage response"/>
    <property type="evidence" value="ECO:0000250"/>
    <property type="project" value="UniProtKB"/>
</dbReference>
<dbReference type="GO" id="GO:0140861">
    <property type="term" value="P:DNA repair-dependent chromatin remodeling"/>
    <property type="evidence" value="ECO:0000250"/>
    <property type="project" value="UniProtKB"/>
</dbReference>
<dbReference type="GO" id="GO:0006302">
    <property type="term" value="P:double-strand break repair"/>
    <property type="evidence" value="ECO:0000250"/>
    <property type="project" value="UniProtKB"/>
</dbReference>
<dbReference type="GO" id="GO:0097680">
    <property type="term" value="P:double-strand break repair via classical nonhomologous end joining"/>
    <property type="evidence" value="ECO:0000266"/>
    <property type="project" value="RGD"/>
</dbReference>
<dbReference type="GO" id="GO:0006303">
    <property type="term" value="P:double-strand break repair via nonhomologous end joining"/>
    <property type="evidence" value="ECO:0000266"/>
    <property type="project" value="RGD"/>
</dbReference>
<dbReference type="GO" id="GO:0040029">
    <property type="term" value="P:epigenetic regulation of gene expression"/>
    <property type="evidence" value="ECO:0000266"/>
    <property type="project" value="RGD"/>
</dbReference>
<dbReference type="GO" id="GO:0045190">
    <property type="term" value="P:isotype switching"/>
    <property type="evidence" value="ECO:0000250"/>
    <property type="project" value="UniProtKB"/>
</dbReference>
<dbReference type="GO" id="GO:0034244">
    <property type="term" value="P:negative regulation of transcription elongation by RNA polymerase II"/>
    <property type="evidence" value="ECO:0000250"/>
    <property type="project" value="UniProtKB"/>
</dbReference>
<dbReference type="GO" id="GO:0045739">
    <property type="term" value="P:positive regulation of DNA repair"/>
    <property type="evidence" value="ECO:0000250"/>
    <property type="project" value="UniProtKB"/>
</dbReference>
<dbReference type="GO" id="GO:0070534">
    <property type="term" value="P:protein K63-linked ubiquitination"/>
    <property type="evidence" value="ECO:0000250"/>
    <property type="project" value="UniProtKB"/>
</dbReference>
<dbReference type="GO" id="GO:0016567">
    <property type="term" value="P:protein ubiquitination"/>
    <property type="evidence" value="ECO:0000250"/>
    <property type="project" value="UniProtKB"/>
</dbReference>
<dbReference type="GO" id="GO:0032880">
    <property type="term" value="P:regulation of protein localization"/>
    <property type="evidence" value="ECO:0000266"/>
    <property type="project" value="RGD"/>
</dbReference>
<dbReference type="GO" id="GO:0010212">
    <property type="term" value="P:response to ionizing radiation"/>
    <property type="evidence" value="ECO:0000250"/>
    <property type="project" value="UniProtKB"/>
</dbReference>
<dbReference type="GO" id="GO:0006511">
    <property type="term" value="P:ubiquitin-dependent protein catabolic process"/>
    <property type="evidence" value="ECO:0000250"/>
    <property type="project" value="UniProtKB"/>
</dbReference>
<dbReference type="CDD" id="cd21952">
    <property type="entry name" value="MIU2_RNF168"/>
    <property type="match status" value="1"/>
</dbReference>
<dbReference type="CDD" id="cd16550">
    <property type="entry name" value="RING-HC_RNF168"/>
    <property type="match status" value="1"/>
</dbReference>
<dbReference type="CDD" id="cd22265">
    <property type="entry name" value="UDM1_RNF168"/>
    <property type="match status" value="1"/>
</dbReference>
<dbReference type="FunFam" id="3.30.40.10:FF:000466">
    <property type="entry name" value="E3 ubiquitin-protein ligase RNF168"/>
    <property type="match status" value="1"/>
</dbReference>
<dbReference type="Gene3D" id="3.30.40.10">
    <property type="entry name" value="Zinc/RING finger domain, C3HC4 (zinc finger)"/>
    <property type="match status" value="1"/>
</dbReference>
<dbReference type="HAMAP" id="MF_03066">
    <property type="entry name" value="RNF168"/>
    <property type="match status" value="1"/>
</dbReference>
<dbReference type="InterPro" id="IPR034725">
    <property type="entry name" value="RNF168"/>
</dbReference>
<dbReference type="InterPro" id="IPR051657">
    <property type="entry name" value="RNF168/RNF169_E3_ubiq-ligase"/>
</dbReference>
<dbReference type="InterPro" id="IPR018957">
    <property type="entry name" value="Znf_C3HC4_RING-type"/>
</dbReference>
<dbReference type="InterPro" id="IPR001841">
    <property type="entry name" value="Znf_RING"/>
</dbReference>
<dbReference type="InterPro" id="IPR013083">
    <property type="entry name" value="Znf_RING/FYVE/PHD"/>
</dbReference>
<dbReference type="PANTHER" id="PTHR23328:SF1">
    <property type="entry name" value="E3 UBIQUITIN-PROTEIN LIGASE RNF168"/>
    <property type="match status" value="1"/>
</dbReference>
<dbReference type="PANTHER" id="PTHR23328">
    <property type="entry name" value="RING-TYPE DOMAIN-CONTAINING PROTEIN"/>
    <property type="match status" value="1"/>
</dbReference>
<dbReference type="Pfam" id="PF00097">
    <property type="entry name" value="zf-C3HC4"/>
    <property type="match status" value="1"/>
</dbReference>
<dbReference type="SMART" id="SM00184">
    <property type="entry name" value="RING"/>
    <property type="match status" value="1"/>
</dbReference>
<dbReference type="SUPFAM" id="SSF57850">
    <property type="entry name" value="RING/U-box"/>
    <property type="match status" value="1"/>
</dbReference>
<dbReference type="PROSITE" id="PS50089">
    <property type="entry name" value="ZF_RING_2"/>
    <property type="match status" value="1"/>
</dbReference>
<evidence type="ECO:0000250" key="1">
    <source>
        <dbReference type="UniProtKB" id="Q80XJ2"/>
    </source>
</evidence>
<evidence type="ECO:0000250" key="2">
    <source>
        <dbReference type="UniProtKB" id="Q8IYW5"/>
    </source>
</evidence>
<evidence type="ECO:0000255" key="3">
    <source>
        <dbReference type="HAMAP-Rule" id="MF_03066"/>
    </source>
</evidence>
<evidence type="ECO:0000256" key="4">
    <source>
        <dbReference type="SAM" id="MobiDB-lite"/>
    </source>
</evidence>
<evidence type="ECO:0007744" key="5">
    <source>
    </source>
</evidence>
<evidence type="ECO:0007744" key="6">
    <source>
    </source>
</evidence>
<gene>
    <name evidence="3" type="primary">Rnf168</name>
</gene>
<sequence>MAAPKNSIPSLAECQCGICMEILVEPVTLPCNHTLCNPCFQSTVEKANLCCPFCRRRVSSWTRYHTRRNSLVNTDLWEIIQKHYAKECKLRISGQESKEIVDEYQPVRLLSKPGELRREYEEEISKVEAERQASKEEENKASEEYIQRLLAEEEEEEKRRTERRRSEMEEQLRGDEELARRLSTSINSNYERNILASPLSSRKSDPVTNKSQKKNTNKQKNFGDIQRYLSPKSKPGTAWACKTEHGEDMCKSKETDSSDTKSPVLQDTDVEESMPTHSPQTCPETQGQGPEPLTEMPVPWLCARNAEQCLEGKAEAVSTNPDDSCIVNDGGPRAIVSNSKEAAVKPPTKIENEEYSVSGVTQLTGGNGVPTESRVYDLLVGKEISERENQESVFEEVMDPCFSAKRRKIFITSSLDQEETEVNFTQKLIDLEHMLFERHKQEEQDRLLALQLQKEADKEKMVPNRQKGSPDQYQLRTSSPPDGLLNGQRKNVKDRNSPKQTADRSKSQRSRKGEYWETFESTWKGSVNGTKMPTPRKDSCNVSKRACPLQHRSAQKSILQMFQR</sequence>
<feature type="chain" id="PRO_0000367282" description="E3 ubiquitin-protein ligase RNF168">
    <location>
        <begin position="1"/>
        <end position="564"/>
    </location>
</feature>
<feature type="zinc finger region" description="RING-type" evidence="3">
    <location>
        <begin position="16"/>
        <end position="55"/>
    </location>
</feature>
<feature type="region of interest" description="Disordered" evidence="4">
    <location>
        <begin position="149"/>
        <end position="179"/>
    </location>
</feature>
<feature type="region of interest" description="Disordered" evidence="4">
    <location>
        <begin position="193"/>
        <end position="291"/>
    </location>
</feature>
<feature type="region of interest" description="Disordered" evidence="4">
    <location>
        <begin position="455"/>
        <end position="564"/>
    </location>
</feature>
<feature type="short sequence motif" description="LR motif 1" evidence="3">
    <location>
        <begin position="110"/>
        <end position="128"/>
    </location>
</feature>
<feature type="short sequence motif" description="UMI motif" evidence="3">
    <location>
        <begin position="143"/>
        <end position="151"/>
    </location>
</feature>
<feature type="short sequence motif" description="MIU motif 1" evidence="3">
    <location>
        <begin position="168"/>
        <end position="191"/>
    </location>
</feature>
<feature type="short sequence motif" description="MIU motif 2" evidence="3">
    <location>
        <begin position="438"/>
        <end position="461"/>
    </location>
</feature>
<feature type="short sequence motif" description="LR motif 2" evidence="3">
    <location>
        <begin position="465"/>
        <end position="476"/>
    </location>
</feature>
<feature type="compositionally biased region" description="Basic and acidic residues" evidence="4">
    <location>
        <begin position="157"/>
        <end position="179"/>
    </location>
</feature>
<feature type="compositionally biased region" description="Basic and acidic residues" evidence="4">
    <location>
        <begin position="242"/>
        <end position="259"/>
    </location>
</feature>
<feature type="compositionally biased region" description="Polar residues" evidence="4">
    <location>
        <begin position="275"/>
        <end position="288"/>
    </location>
</feature>
<feature type="compositionally biased region" description="Polar residues" evidence="4">
    <location>
        <begin position="466"/>
        <end position="480"/>
    </location>
</feature>
<feature type="compositionally biased region" description="Basic and acidic residues" evidence="4">
    <location>
        <begin position="491"/>
        <end position="515"/>
    </location>
</feature>
<feature type="compositionally biased region" description="Polar residues" evidence="4">
    <location>
        <begin position="519"/>
        <end position="531"/>
    </location>
</feature>
<feature type="compositionally biased region" description="Polar residues" evidence="4">
    <location>
        <begin position="555"/>
        <end position="564"/>
    </location>
</feature>
<feature type="modified residue" description="Phosphoserine" evidence="1">
    <location>
        <position position="70"/>
    </location>
</feature>
<feature type="modified residue" description="Phosphoserine" evidence="2">
    <location>
        <position position="134"/>
    </location>
</feature>
<feature type="modified residue" description="Phosphoserine" evidence="6">
    <location>
        <position position="197"/>
    </location>
</feature>
<feature type="modified residue" description="Phosphothreonine" evidence="5">
    <location>
        <position position="348"/>
    </location>
</feature>
<feature type="modified residue" description="Phosphothreonine" evidence="5">
    <location>
        <position position="361"/>
    </location>
</feature>
<feature type="modified residue" description="Phosphoserine" evidence="2">
    <location>
        <position position="413"/>
    </location>
</feature>
<feature type="modified residue" description="Phosphoserine" evidence="2">
    <location>
        <position position="414"/>
    </location>
</feature>
<feature type="modified residue" description="Phosphoserine" evidence="2">
    <location>
        <position position="469"/>
    </location>
</feature>
<feature type="cross-link" description="Glycyl lysine isopeptide (Lys-Gly) (interchain with G-Cter in SUMO2)" evidence="2">
    <location>
        <position position="210"/>
    </location>
</feature>
<feature type="cross-link" description="Glycyl lysine isopeptide (Lys-Gly) (interchain with G-Cter in SUMO2)" evidence="2">
    <location>
        <position position="524"/>
    </location>
</feature>
<organism>
    <name type="scientific">Rattus norvegicus</name>
    <name type="common">Rat</name>
    <dbReference type="NCBI Taxonomy" id="10116"/>
    <lineage>
        <taxon>Eukaryota</taxon>
        <taxon>Metazoa</taxon>
        <taxon>Chordata</taxon>
        <taxon>Craniata</taxon>
        <taxon>Vertebrata</taxon>
        <taxon>Euteleostomi</taxon>
        <taxon>Mammalia</taxon>
        <taxon>Eutheria</taxon>
        <taxon>Euarchontoglires</taxon>
        <taxon>Glires</taxon>
        <taxon>Rodentia</taxon>
        <taxon>Myomorpha</taxon>
        <taxon>Muroidea</taxon>
        <taxon>Muridae</taxon>
        <taxon>Murinae</taxon>
        <taxon>Rattus</taxon>
    </lineage>
</organism>
<comment type="function">
    <text evidence="3">E3 ubiquitin-protein ligase required for accumulation of repair proteins to sites of DNA damage. Acts with UBE2N/UBC13 to amplify the RNF8-dependent histone ubiquitination. Recruited to sites of DNA damage at double-strand breaks (DSBs) by binding to ubiquitinated histone H2A and H2AX and amplifies the RNF8-dependent H2A ubiquitination, promoting the formation of 'Lys-63'-linked ubiquitin conjugates. This leads to concentrate ubiquitinated histones H2A and H2AX at DNA lesions to the threshold required for recruitment of TP53BP1 and BRCA1. Also recruited at DNA interstrand cross-links (ICLs) sites and promotes accumulation of 'Lys-63'-linked ubiquitination of histones H2A and H2AX, leading to recruitment of FAAP20 and Fanconi anemia (FA) complex, followed by interstrand cross-link repair. H2A ubiquitination also mediates the ATM-dependent transcriptional silencing at regions flanking DSBs in cis, a mechanism to avoid collision between transcription and repair intermediates. Also involved in class switch recombination in immune system, via its role in regulation of DSBs repair. Following DNA damage, promotes the ubiquitination and degradation of JMJD2A/KDM4A in collaboration with RNF8, leading to unmask H4K20me2 mark and promote the recruitment of TP53BP1 at DNA damage sites. Not able to initiate 'Lys-63'-linked ubiquitination in vitro; possibly due to partial occlusion of the UBE2N/UBC13-binding region. Catalyzes monoubiquitination of 'Lys-13' and 'Lys-15' of nucleosomal histone H2A (H2AK13Ub and H2AK15Ub, respectively).</text>
</comment>
<comment type="catalytic activity">
    <reaction evidence="3">
        <text>S-ubiquitinyl-[E2 ubiquitin-conjugating enzyme]-L-cysteine + [acceptor protein]-L-lysine = [E2 ubiquitin-conjugating enzyme]-L-cysteine + N(6)-ubiquitinyl-[acceptor protein]-L-lysine.</text>
        <dbReference type="EC" id="2.3.2.27"/>
    </reaction>
</comment>
<comment type="pathway">
    <text evidence="3">Protein modification; protein ubiquitination.</text>
</comment>
<comment type="subunit">
    <text evidence="3">Monomer. Interacts with UBE2N/UBC13.</text>
</comment>
<comment type="subcellular location">
    <subcellularLocation>
        <location evidence="3">Nucleus</location>
    </subcellularLocation>
    <text evidence="3">Localizes to double-strand breaks (DSBs) sites of DNA damage.</text>
</comment>
<comment type="domain">
    <text evidence="3">The MIU motif (motif interacting with ubiquitin) mediates the interaction with both 'Lys-48'- and 'Lys-63'-linked ubiquitin chains. The UMI motif mediates interaction with ubiquitin with a preference for 'Lys-63'-linked ubiquitin. The specificity for different types of ubiquitin is mediated by juxtaposition of ubiquitin-binding motifs (MIU and UMI motifs) with LR motifs (LRMs).</text>
</comment>
<comment type="PTM">
    <text evidence="3">Sumoylated with SUMO1 by PIAS4 in response to double-strand breaks (DSBs).</text>
</comment>
<comment type="PTM">
    <text evidence="3">Ubiquitinated.</text>
</comment>
<comment type="similarity">
    <text evidence="3">Belongs to the RNF168 family.</text>
</comment>
<comment type="caution">
    <text evidence="3">According to a well-established model, RNF168 cannot initiate H2A 'Lys-63'-linked ubiquitination and is recruited following RNF8-dependent histone ubiquitination to amplify H2A 'Lys-63'-linked ubiquitination. However, other data suggest that RNF168 is the priming ubiquitin ligase by mediating monoubiquitination of 'Lys-13' and 'Lys-15' of nucleosomal histone H2A (H2AK13Ub and H2AK15Ub respectively). These data suggest that RNF168 might be recruited to DSBs sites in a RNF8-dependent manner by binding to non-histone proteins ubiquitinated via 'Lys-63'-linked and initiates monoubiquitination of H2A, which is then amplified by RNF8. Additional evidence is however required to confirm these data.</text>
</comment>
<proteinExistence type="evidence at protein level"/>
<accession>B2RYR0</accession>
<name>RN168_RAT</name>